<dbReference type="EC" id="3.5.1.5" evidence="1"/>
<dbReference type="EMBL" id="CP000854">
    <property type="protein sequence ID" value="ACC41166.1"/>
    <property type="molecule type" value="Genomic_DNA"/>
</dbReference>
<dbReference type="RefSeq" id="WP_012394436.1">
    <property type="nucleotide sequence ID" value="NC_010612.1"/>
</dbReference>
<dbReference type="SMR" id="B2HSZ2"/>
<dbReference type="STRING" id="216594.MMAR_2724"/>
<dbReference type="MEROPS" id="M38.982"/>
<dbReference type="KEGG" id="mmi:MMAR_2724"/>
<dbReference type="eggNOG" id="COG0804">
    <property type="taxonomic scope" value="Bacteria"/>
</dbReference>
<dbReference type="HOGENOM" id="CLU_000980_0_0_11"/>
<dbReference type="OrthoDB" id="9802793at2"/>
<dbReference type="UniPathway" id="UPA00258">
    <property type="reaction ID" value="UER00370"/>
</dbReference>
<dbReference type="Proteomes" id="UP000001190">
    <property type="component" value="Chromosome"/>
</dbReference>
<dbReference type="GO" id="GO:0005737">
    <property type="term" value="C:cytoplasm"/>
    <property type="evidence" value="ECO:0007669"/>
    <property type="project" value="UniProtKB-SubCell"/>
</dbReference>
<dbReference type="GO" id="GO:0016151">
    <property type="term" value="F:nickel cation binding"/>
    <property type="evidence" value="ECO:0007669"/>
    <property type="project" value="UniProtKB-UniRule"/>
</dbReference>
<dbReference type="GO" id="GO:0009039">
    <property type="term" value="F:urease activity"/>
    <property type="evidence" value="ECO:0007669"/>
    <property type="project" value="UniProtKB-UniRule"/>
</dbReference>
<dbReference type="GO" id="GO:0043419">
    <property type="term" value="P:urea catabolic process"/>
    <property type="evidence" value="ECO:0007669"/>
    <property type="project" value="UniProtKB-UniRule"/>
</dbReference>
<dbReference type="CDD" id="cd00375">
    <property type="entry name" value="Urease_alpha"/>
    <property type="match status" value="1"/>
</dbReference>
<dbReference type="Gene3D" id="3.20.20.140">
    <property type="entry name" value="Metal-dependent hydrolases"/>
    <property type="match status" value="1"/>
</dbReference>
<dbReference type="Gene3D" id="2.30.40.10">
    <property type="entry name" value="Urease, subunit C, domain 1"/>
    <property type="match status" value="1"/>
</dbReference>
<dbReference type="HAMAP" id="MF_01953">
    <property type="entry name" value="Urease_alpha"/>
    <property type="match status" value="1"/>
</dbReference>
<dbReference type="InterPro" id="IPR006680">
    <property type="entry name" value="Amidohydro-rel"/>
</dbReference>
<dbReference type="InterPro" id="IPR011059">
    <property type="entry name" value="Metal-dep_hydrolase_composite"/>
</dbReference>
<dbReference type="InterPro" id="IPR032466">
    <property type="entry name" value="Metal_Hydrolase"/>
</dbReference>
<dbReference type="InterPro" id="IPR011612">
    <property type="entry name" value="Urease_alpha_N_dom"/>
</dbReference>
<dbReference type="InterPro" id="IPR050112">
    <property type="entry name" value="Urease_alpha_subunit"/>
</dbReference>
<dbReference type="InterPro" id="IPR017950">
    <property type="entry name" value="Urease_AS"/>
</dbReference>
<dbReference type="InterPro" id="IPR005848">
    <property type="entry name" value="Urease_asu"/>
</dbReference>
<dbReference type="InterPro" id="IPR017951">
    <property type="entry name" value="Urease_asu_c"/>
</dbReference>
<dbReference type="InterPro" id="IPR029754">
    <property type="entry name" value="Urease_Ni-bd"/>
</dbReference>
<dbReference type="NCBIfam" id="NF009685">
    <property type="entry name" value="PRK13206.1"/>
    <property type="match status" value="1"/>
</dbReference>
<dbReference type="NCBIfam" id="NF009686">
    <property type="entry name" value="PRK13207.1"/>
    <property type="match status" value="1"/>
</dbReference>
<dbReference type="NCBIfam" id="TIGR01792">
    <property type="entry name" value="urease_alph"/>
    <property type="match status" value="1"/>
</dbReference>
<dbReference type="PANTHER" id="PTHR43440">
    <property type="entry name" value="UREASE"/>
    <property type="match status" value="1"/>
</dbReference>
<dbReference type="PANTHER" id="PTHR43440:SF1">
    <property type="entry name" value="UREASE"/>
    <property type="match status" value="1"/>
</dbReference>
<dbReference type="Pfam" id="PF01979">
    <property type="entry name" value="Amidohydro_1"/>
    <property type="match status" value="1"/>
</dbReference>
<dbReference type="Pfam" id="PF00449">
    <property type="entry name" value="Urease_alpha"/>
    <property type="match status" value="1"/>
</dbReference>
<dbReference type="PRINTS" id="PR01752">
    <property type="entry name" value="UREASE"/>
</dbReference>
<dbReference type="SUPFAM" id="SSF51338">
    <property type="entry name" value="Composite domain of metallo-dependent hydrolases"/>
    <property type="match status" value="2"/>
</dbReference>
<dbReference type="SUPFAM" id="SSF51556">
    <property type="entry name" value="Metallo-dependent hydrolases"/>
    <property type="match status" value="1"/>
</dbReference>
<dbReference type="PROSITE" id="PS01120">
    <property type="entry name" value="UREASE_1"/>
    <property type="match status" value="1"/>
</dbReference>
<dbReference type="PROSITE" id="PS00145">
    <property type="entry name" value="UREASE_2"/>
    <property type="match status" value="1"/>
</dbReference>
<dbReference type="PROSITE" id="PS51368">
    <property type="entry name" value="UREASE_3"/>
    <property type="match status" value="1"/>
</dbReference>
<gene>
    <name evidence="1" type="primary">ureC</name>
    <name type="ordered locus">MMAR_2724</name>
</gene>
<sequence>MARLSRERYAQLYGPTTGDRIRLADTDLLVEITEDRCGGPGLAGDEAVFGGGKVLRESMGQGRVTRAEGAPDTVITGAVIIDYWGIIKADIGIRDGRIVAIGKAGNPNIMSGIHPDLVVGPSTEIIGGNGRIVTAGAIDCHVHLICPQVIAEALGSGITTIIGGGTGPAEGSKSTTVTPGGWHLARMLEALDSWPVNIALLGKGNTVNPDALWEQLRGGASGFKLHEDWGSSPAAIDACLTVADAAGVQVALHSDTLNEMGFVEDTLAAIAGRSIHTYHTEGAGGGHAPDIITVAAHPNVLPSSTNPTRPHTVNTLDEHLDMLMVCHHLNPRIPEDLAFAESRIRPSTIAAEDLLHDIGAISMIGSDSQAMGRVGEVVMRTWQTAHVMKQRRGALEGDPSGRYSADNNRARRYVAKYTICPAVAHGLDHEVGSVEVGKLADLVLWEPAFFGVRPHAVVKGGAIAWAAMGDANASIPTPQPVLPRPMFGASPAVAAATSVHFVAAQSIEAGLADQIAVDRRLVPVADVRAVGKADMPLNDAQPRIEVDPDTFTVRIDGEVWEQQPATELPMAQRYFLF</sequence>
<keyword id="KW-0963">Cytoplasm</keyword>
<keyword id="KW-0378">Hydrolase</keyword>
<keyword id="KW-0479">Metal-binding</keyword>
<keyword id="KW-0533">Nickel</keyword>
<keyword id="KW-1185">Reference proteome</keyword>
<name>URE1_MYCMM</name>
<evidence type="ECO:0000255" key="1">
    <source>
        <dbReference type="HAMAP-Rule" id="MF_01953"/>
    </source>
</evidence>
<proteinExistence type="inferred from homology"/>
<accession>B2HSZ2</accession>
<protein>
    <recommendedName>
        <fullName evidence="1">Urease subunit alpha</fullName>
        <ecNumber evidence="1">3.5.1.5</ecNumber>
    </recommendedName>
    <alternativeName>
        <fullName evidence="1">Urea amidohydrolase subunit alpha</fullName>
    </alternativeName>
</protein>
<comment type="catalytic activity">
    <reaction evidence="1">
        <text>urea + 2 H2O + H(+) = hydrogencarbonate + 2 NH4(+)</text>
        <dbReference type="Rhea" id="RHEA:20557"/>
        <dbReference type="ChEBI" id="CHEBI:15377"/>
        <dbReference type="ChEBI" id="CHEBI:15378"/>
        <dbReference type="ChEBI" id="CHEBI:16199"/>
        <dbReference type="ChEBI" id="CHEBI:17544"/>
        <dbReference type="ChEBI" id="CHEBI:28938"/>
        <dbReference type="EC" id="3.5.1.5"/>
    </reaction>
</comment>
<comment type="cofactor">
    <cofactor evidence="1">
        <name>Ni cation</name>
        <dbReference type="ChEBI" id="CHEBI:25516"/>
    </cofactor>
    <text evidence="1">Binds 2 nickel ions per subunit.</text>
</comment>
<comment type="pathway">
    <text evidence="1">Nitrogen metabolism; urea degradation; CO(2) and NH(3) from urea (urease route): step 1/1.</text>
</comment>
<comment type="subunit">
    <text evidence="1">Heterotrimer of UreA (gamma), UreB (beta) and UreC (alpha) subunits. Three heterotrimers associate to form the active enzyme.</text>
</comment>
<comment type="subcellular location">
    <subcellularLocation>
        <location evidence="1">Cytoplasm</location>
    </subcellularLocation>
</comment>
<comment type="PTM">
    <text evidence="1">Carboxylation allows a single lysine to coordinate two nickel ions.</text>
</comment>
<comment type="similarity">
    <text evidence="1">Belongs to the metallo-dependent hydrolases superfamily. Urease alpha subunit family.</text>
</comment>
<reference key="1">
    <citation type="journal article" date="2008" name="Genome Res.">
        <title>Insights from the complete genome sequence of Mycobacterium marinum on the evolution of Mycobacterium tuberculosis.</title>
        <authorList>
            <person name="Stinear T.P."/>
            <person name="Seemann T."/>
            <person name="Harrison P.F."/>
            <person name="Jenkin G.A."/>
            <person name="Davies J.K."/>
            <person name="Johnson P.D."/>
            <person name="Abdellah Z."/>
            <person name="Arrowsmith C."/>
            <person name="Chillingworth T."/>
            <person name="Churcher C."/>
            <person name="Clarke K."/>
            <person name="Cronin A."/>
            <person name="Davis P."/>
            <person name="Goodhead I."/>
            <person name="Holroyd N."/>
            <person name="Jagels K."/>
            <person name="Lord A."/>
            <person name="Moule S."/>
            <person name="Mungall K."/>
            <person name="Norbertczak H."/>
            <person name="Quail M.A."/>
            <person name="Rabbinowitsch E."/>
            <person name="Walker D."/>
            <person name="White B."/>
            <person name="Whitehead S."/>
            <person name="Small P.L."/>
            <person name="Brosch R."/>
            <person name="Ramakrishnan L."/>
            <person name="Fischbach M.A."/>
            <person name="Parkhill J."/>
            <person name="Cole S.T."/>
        </authorList>
    </citation>
    <scope>NUCLEOTIDE SEQUENCE [LARGE SCALE GENOMIC DNA]</scope>
    <source>
        <strain>ATCC BAA-535 / M</strain>
    </source>
</reference>
<organism>
    <name type="scientific">Mycobacterium marinum (strain ATCC BAA-535 / M)</name>
    <dbReference type="NCBI Taxonomy" id="216594"/>
    <lineage>
        <taxon>Bacteria</taxon>
        <taxon>Bacillati</taxon>
        <taxon>Actinomycetota</taxon>
        <taxon>Actinomycetes</taxon>
        <taxon>Mycobacteriales</taxon>
        <taxon>Mycobacteriaceae</taxon>
        <taxon>Mycobacterium</taxon>
        <taxon>Mycobacterium ulcerans group</taxon>
    </lineage>
</organism>
<feature type="chain" id="PRO_1000188885" description="Urease subunit alpha">
    <location>
        <begin position="1"/>
        <end position="577"/>
    </location>
</feature>
<feature type="domain" description="Urease" evidence="1">
    <location>
        <begin position="136"/>
        <end position="577"/>
    </location>
</feature>
<feature type="active site" description="Proton donor" evidence="1">
    <location>
        <position position="327"/>
    </location>
</feature>
<feature type="binding site" evidence="1">
    <location>
        <position position="141"/>
    </location>
    <ligand>
        <name>Ni(2+)</name>
        <dbReference type="ChEBI" id="CHEBI:49786"/>
        <label>1</label>
    </ligand>
</feature>
<feature type="binding site" evidence="1">
    <location>
        <position position="143"/>
    </location>
    <ligand>
        <name>Ni(2+)</name>
        <dbReference type="ChEBI" id="CHEBI:49786"/>
        <label>1</label>
    </ligand>
</feature>
<feature type="binding site" description="via carbamate group" evidence="1">
    <location>
        <position position="224"/>
    </location>
    <ligand>
        <name>Ni(2+)</name>
        <dbReference type="ChEBI" id="CHEBI:49786"/>
        <label>1</label>
    </ligand>
</feature>
<feature type="binding site" description="via carbamate group" evidence="1">
    <location>
        <position position="224"/>
    </location>
    <ligand>
        <name>Ni(2+)</name>
        <dbReference type="ChEBI" id="CHEBI:49786"/>
        <label>2</label>
    </ligand>
</feature>
<feature type="binding site" evidence="1">
    <location>
        <position position="226"/>
    </location>
    <ligand>
        <name>substrate</name>
    </ligand>
</feature>
<feature type="binding site" evidence="1">
    <location>
        <position position="253"/>
    </location>
    <ligand>
        <name>Ni(2+)</name>
        <dbReference type="ChEBI" id="CHEBI:49786"/>
        <label>2</label>
    </ligand>
</feature>
<feature type="binding site" evidence="1">
    <location>
        <position position="279"/>
    </location>
    <ligand>
        <name>Ni(2+)</name>
        <dbReference type="ChEBI" id="CHEBI:49786"/>
        <label>2</label>
    </ligand>
</feature>
<feature type="binding site" evidence="1">
    <location>
        <position position="367"/>
    </location>
    <ligand>
        <name>Ni(2+)</name>
        <dbReference type="ChEBI" id="CHEBI:49786"/>
        <label>1</label>
    </ligand>
</feature>
<feature type="modified residue" description="N6-carboxylysine" evidence="1">
    <location>
        <position position="224"/>
    </location>
</feature>